<feature type="chain" id="PRO_0000456035" description="Glycerol-3-phosphate dehydrogenase [NAD(+)] 2">
    <location>
        <begin position="1"/>
        <end position="371"/>
    </location>
</feature>
<feature type="active site" description="Proton acceptor" evidence="2">
    <location>
        <position position="222"/>
    </location>
</feature>
<feature type="binding site" evidence="4">
    <location>
        <begin position="18"/>
        <end position="23"/>
    </location>
    <ligand>
        <name>NAD(+)</name>
        <dbReference type="ChEBI" id="CHEBI:57540"/>
    </ligand>
</feature>
<feature type="binding site" evidence="4">
    <location>
        <position position="50"/>
    </location>
    <ligand>
        <name>NAD(+)</name>
        <dbReference type="ChEBI" id="CHEBI:57540"/>
    </ligand>
</feature>
<feature type="binding site" evidence="4">
    <location>
        <position position="106"/>
    </location>
    <ligand>
        <name>NAD(+)</name>
        <dbReference type="ChEBI" id="CHEBI:57540"/>
    </ligand>
</feature>
<feature type="binding site" evidence="3">
    <location>
        <position position="129"/>
    </location>
    <ligand>
        <name>substrate</name>
    </ligand>
</feature>
<feature type="binding site" evidence="4">
    <location>
        <position position="162"/>
    </location>
    <ligand>
        <name>NAD(+)</name>
        <dbReference type="ChEBI" id="CHEBI:57540"/>
    </ligand>
</feature>
<feature type="binding site" evidence="3">
    <location>
        <begin position="294"/>
        <end position="295"/>
    </location>
    <ligand>
        <name>substrate</name>
    </ligand>
</feature>
<feature type="binding site" evidence="4">
    <location>
        <position position="294"/>
    </location>
    <ligand>
        <name>NAD(+)</name>
        <dbReference type="ChEBI" id="CHEBI:57540"/>
    </ligand>
</feature>
<feature type="binding site" evidence="4">
    <location>
        <position position="323"/>
    </location>
    <ligand>
        <name>NAD(+)</name>
        <dbReference type="ChEBI" id="CHEBI:57540"/>
    </ligand>
</feature>
<keyword id="KW-0134">Cell wall</keyword>
<keyword id="KW-0963">Cytoplasm</keyword>
<keyword id="KW-0520">NAD</keyword>
<keyword id="KW-0560">Oxidoreductase</keyword>
<keyword id="KW-0576">Peroxisome</keyword>
<keyword id="KW-1185">Reference proteome</keyword>
<keyword id="KW-0964">Secreted</keyword>
<keyword id="KW-0843">Virulence</keyword>
<evidence type="ECO:0000250" key="1">
    <source>
        <dbReference type="UniProtKB" id="Q00055"/>
    </source>
</evidence>
<evidence type="ECO:0000255" key="2">
    <source>
        <dbReference type="PIRSR" id="PIRSR000114-1"/>
    </source>
</evidence>
<evidence type="ECO:0000255" key="3">
    <source>
        <dbReference type="PIRSR" id="PIRSR000114-2"/>
    </source>
</evidence>
<evidence type="ECO:0000255" key="4">
    <source>
        <dbReference type="PIRSR" id="PIRSR000114-3"/>
    </source>
</evidence>
<evidence type="ECO:0000255" key="5">
    <source>
        <dbReference type="RuleBase" id="RU361243"/>
    </source>
</evidence>
<evidence type="ECO:0000269" key="6">
    <source>
    </source>
</evidence>
<evidence type="ECO:0000269" key="7">
    <source>
    </source>
</evidence>
<evidence type="ECO:0000305" key="8"/>
<evidence type="ECO:0000312" key="9">
    <source>
        <dbReference type="CGD" id="CAL0000176146"/>
    </source>
</evidence>
<evidence type="ECO:0000312" key="10">
    <source>
        <dbReference type="EMBL" id="AOW30137.1"/>
    </source>
</evidence>
<evidence type="ECO:0000312" key="11">
    <source>
        <dbReference type="Proteomes" id="UP000000559"/>
    </source>
</evidence>
<dbReference type="EC" id="1.1.1.8" evidence="5"/>
<dbReference type="EMBL" id="CP017628">
    <property type="protein sequence ID" value="AOW30137.1"/>
    <property type="molecule type" value="Genomic_DNA"/>
</dbReference>
<dbReference type="RefSeq" id="XP_713824.1">
    <property type="nucleotide sequence ID" value="XM_708731.2"/>
</dbReference>
<dbReference type="SMR" id="Q59W33"/>
<dbReference type="STRING" id="237561.Q59W33"/>
<dbReference type="EnsemblFungi" id="C6_02010C_A-T">
    <property type="protein sequence ID" value="C6_02010C_A-T-p1"/>
    <property type="gene ID" value="C6_02010C_A"/>
</dbReference>
<dbReference type="GeneID" id="3644563"/>
<dbReference type="KEGG" id="cal:CAALFM_C602010CA"/>
<dbReference type="CGD" id="CAL0000176146">
    <property type="gene designation" value="GPD2"/>
</dbReference>
<dbReference type="VEuPathDB" id="FungiDB:C6_02010C_A"/>
<dbReference type="eggNOG" id="KOG2711">
    <property type="taxonomic scope" value="Eukaryota"/>
</dbReference>
<dbReference type="HOGENOM" id="CLU_033449_2_3_1"/>
<dbReference type="InParanoid" id="Q59W33"/>
<dbReference type="OMA" id="ICYEGRS"/>
<dbReference type="OrthoDB" id="10263760at2759"/>
<dbReference type="Proteomes" id="UP000000559">
    <property type="component" value="Chromosome 6"/>
</dbReference>
<dbReference type="GO" id="GO:0009986">
    <property type="term" value="C:cell surface"/>
    <property type="evidence" value="ECO:0000314"/>
    <property type="project" value="CGD"/>
</dbReference>
<dbReference type="GO" id="GO:0005829">
    <property type="term" value="C:cytosol"/>
    <property type="evidence" value="ECO:0000318"/>
    <property type="project" value="GO_Central"/>
</dbReference>
<dbReference type="GO" id="GO:0005576">
    <property type="term" value="C:extracellular region"/>
    <property type="evidence" value="ECO:0000314"/>
    <property type="project" value="UniProtKB"/>
</dbReference>
<dbReference type="GO" id="GO:1903561">
    <property type="term" value="C:extracellular vesicle"/>
    <property type="evidence" value="ECO:0000314"/>
    <property type="project" value="CGD"/>
</dbReference>
<dbReference type="GO" id="GO:0009277">
    <property type="term" value="C:fungal-type cell wall"/>
    <property type="evidence" value="ECO:0000314"/>
    <property type="project" value="UniProtKB"/>
</dbReference>
<dbReference type="GO" id="GO:0005634">
    <property type="term" value="C:nucleus"/>
    <property type="evidence" value="ECO:0000318"/>
    <property type="project" value="GO_Central"/>
</dbReference>
<dbReference type="GO" id="GO:0005777">
    <property type="term" value="C:peroxisome"/>
    <property type="evidence" value="ECO:0007669"/>
    <property type="project" value="UniProtKB-SubCell"/>
</dbReference>
<dbReference type="GO" id="GO:0141152">
    <property type="term" value="F:glycerol-3-phosphate dehydrogenase (NAD+) activity"/>
    <property type="evidence" value="ECO:0007669"/>
    <property type="project" value="UniProtKB-EC"/>
</dbReference>
<dbReference type="GO" id="GO:0051287">
    <property type="term" value="F:NAD binding"/>
    <property type="evidence" value="ECO:0007669"/>
    <property type="project" value="InterPro"/>
</dbReference>
<dbReference type="GO" id="GO:0042803">
    <property type="term" value="F:protein homodimerization activity"/>
    <property type="evidence" value="ECO:0007669"/>
    <property type="project" value="InterPro"/>
</dbReference>
<dbReference type="GO" id="GO:0005975">
    <property type="term" value="P:carbohydrate metabolic process"/>
    <property type="evidence" value="ECO:0007669"/>
    <property type="project" value="InterPro"/>
</dbReference>
<dbReference type="GO" id="GO:0046168">
    <property type="term" value="P:glycerol-3-phosphate catabolic process"/>
    <property type="evidence" value="ECO:0007669"/>
    <property type="project" value="InterPro"/>
</dbReference>
<dbReference type="GO" id="GO:0006072">
    <property type="term" value="P:glycerol-3-phosphate metabolic process"/>
    <property type="evidence" value="ECO:0000318"/>
    <property type="project" value="GO_Central"/>
</dbReference>
<dbReference type="GO" id="GO:0042784">
    <property type="term" value="P:symbiont-mediated suppression of host complement activation"/>
    <property type="evidence" value="ECO:0000315"/>
    <property type="project" value="UniProtKB"/>
</dbReference>
<dbReference type="FunFam" id="1.10.1040.10:FF:000004">
    <property type="entry name" value="Glycerol-3-phosphate dehydrogenase [NAD(+)]"/>
    <property type="match status" value="1"/>
</dbReference>
<dbReference type="FunFam" id="3.40.50.720:FF:000294">
    <property type="entry name" value="Glycerol-3-phosphate dehydrogenase [NAD(+)]"/>
    <property type="match status" value="1"/>
</dbReference>
<dbReference type="Gene3D" id="1.10.1040.10">
    <property type="entry name" value="N-(1-d-carboxylethyl)-l-norvaline Dehydrogenase, domain 2"/>
    <property type="match status" value="1"/>
</dbReference>
<dbReference type="Gene3D" id="3.40.50.720">
    <property type="entry name" value="NAD(P)-binding Rossmann-like Domain"/>
    <property type="match status" value="1"/>
</dbReference>
<dbReference type="InterPro" id="IPR008927">
    <property type="entry name" value="6-PGluconate_DH-like_C_sf"/>
</dbReference>
<dbReference type="InterPro" id="IPR013328">
    <property type="entry name" value="6PGD_dom2"/>
</dbReference>
<dbReference type="InterPro" id="IPR006168">
    <property type="entry name" value="G3P_DH_NAD-dep"/>
</dbReference>
<dbReference type="InterPro" id="IPR006109">
    <property type="entry name" value="G3P_DH_NAD-dep_C"/>
</dbReference>
<dbReference type="InterPro" id="IPR017751">
    <property type="entry name" value="G3P_DH_NAD-dep_euk"/>
</dbReference>
<dbReference type="InterPro" id="IPR011128">
    <property type="entry name" value="G3P_DH_NAD-dep_N"/>
</dbReference>
<dbReference type="InterPro" id="IPR036291">
    <property type="entry name" value="NAD(P)-bd_dom_sf"/>
</dbReference>
<dbReference type="NCBIfam" id="TIGR03376">
    <property type="entry name" value="glycerol3P_DH"/>
    <property type="match status" value="1"/>
</dbReference>
<dbReference type="PANTHER" id="PTHR11728">
    <property type="entry name" value="GLYCEROL-3-PHOSPHATE DEHYDROGENASE"/>
    <property type="match status" value="1"/>
</dbReference>
<dbReference type="PANTHER" id="PTHR11728:SF8">
    <property type="entry name" value="GLYCEROL-3-PHOSPHATE DEHYDROGENASE [NAD(+)]-RELATED"/>
    <property type="match status" value="1"/>
</dbReference>
<dbReference type="Pfam" id="PF07479">
    <property type="entry name" value="NAD_Gly3P_dh_C"/>
    <property type="match status" value="1"/>
</dbReference>
<dbReference type="Pfam" id="PF01210">
    <property type="entry name" value="NAD_Gly3P_dh_N"/>
    <property type="match status" value="1"/>
</dbReference>
<dbReference type="PIRSF" id="PIRSF000114">
    <property type="entry name" value="Glycerol-3-P_dh"/>
    <property type="match status" value="1"/>
</dbReference>
<dbReference type="PRINTS" id="PR00077">
    <property type="entry name" value="GPDHDRGNASE"/>
</dbReference>
<dbReference type="SUPFAM" id="SSF48179">
    <property type="entry name" value="6-phosphogluconate dehydrogenase C-terminal domain-like"/>
    <property type="match status" value="1"/>
</dbReference>
<dbReference type="SUPFAM" id="SSF51735">
    <property type="entry name" value="NAD(P)-binding Rossmann-fold domains"/>
    <property type="match status" value="1"/>
</dbReference>
<dbReference type="PROSITE" id="PS00957">
    <property type="entry name" value="NAD_G3PDH"/>
    <property type="match status" value="1"/>
</dbReference>
<protein>
    <recommendedName>
        <fullName evidence="8">Glycerol-3-phosphate dehydrogenase [NAD(+)] 2</fullName>
        <ecNumber evidence="5">1.1.1.8</ecNumber>
    </recommendedName>
</protein>
<organism evidence="11">
    <name type="scientific">Candida albicans (strain SC5314 / ATCC MYA-2876)</name>
    <name type="common">Yeast</name>
    <dbReference type="NCBI Taxonomy" id="237561"/>
    <lineage>
        <taxon>Eukaryota</taxon>
        <taxon>Fungi</taxon>
        <taxon>Dikarya</taxon>
        <taxon>Ascomycota</taxon>
        <taxon>Saccharomycotina</taxon>
        <taxon>Pichiomycetes</taxon>
        <taxon>Debaryomycetaceae</taxon>
        <taxon>Candida/Lodderomyces clade</taxon>
        <taxon>Candida</taxon>
    </lineage>
</organism>
<comment type="function">
    <text evidence="1 6 7">May catalyze the production and accumulation of glycerol during hyperosmotic stress conditions (By similarity). Glycerol acts as a osmoregulator that prevents loss of water and turgor of the cells (By similarity). Mediates evasion of the host innate immune system by binding inhibitory components of the host alternative complement system, in a manner dependent on estrogen-induced inhibition of EBP1 (PubMed:23204165, PubMed:34986357).</text>
</comment>
<comment type="catalytic activity">
    <reaction evidence="5">
        <text>sn-glycerol 3-phosphate + NAD(+) = dihydroxyacetone phosphate + NADH + H(+)</text>
        <dbReference type="Rhea" id="RHEA:11092"/>
        <dbReference type="ChEBI" id="CHEBI:15378"/>
        <dbReference type="ChEBI" id="CHEBI:57540"/>
        <dbReference type="ChEBI" id="CHEBI:57597"/>
        <dbReference type="ChEBI" id="CHEBI:57642"/>
        <dbReference type="ChEBI" id="CHEBI:57945"/>
        <dbReference type="EC" id="1.1.1.8"/>
    </reaction>
</comment>
<comment type="subunit">
    <text evidence="6">Interacts with human CFH/complement factor H; the interaction is direct and enables the pathogen to evade the host innate immune system (PubMed:23204165). Interacts with human CFHR1/complement factor H-related protein 1; the interaction is direct (PubMed:23204165). Interacts with human PLG/plasminogen; the interaction is direct and provides active plasmin on the surface of fungal cells (PubMed:23204165).</text>
</comment>
<comment type="subcellular location">
    <subcellularLocation>
        <location evidence="6">Secreted</location>
        <location evidence="6">Cell wall</location>
    </subcellularLocation>
    <subcellularLocation>
        <location evidence="6">Secreted</location>
    </subcellularLocation>
    <subcellularLocation>
        <location evidence="1">Cytoplasm</location>
    </subcellularLocation>
    <subcellularLocation>
        <location evidence="1">Peroxisome</location>
    </subcellularLocation>
    <text evidence="6">Localizes to the cell wall in both yeast and hyphae.</text>
</comment>
<comment type="induction">
    <text evidence="7">Mildly induced by estrogen (17beta-estradiol).</text>
</comment>
<comment type="disruption phenotype">
    <text evidence="7">In presence of estrogen; decreases binding of host complement factor H protein and increases phagocytosis of the fungus by host (PubMed:34986357). Decreases virulence in presence of estrogen in a zebrafish larval model of infection (PubMed:34986357).</text>
</comment>
<comment type="similarity">
    <text evidence="8">Belongs to the NAD-dependent glycerol-3-phosphate dehydrogenase family.</text>
</comment>
<accession>Q59W33</accession>
<name>GPD2_CANAL</name>
<gene>
    <name evidence="9" type="primary">GPD2</name>
    <name evidence="9" type="ordered locus">orf19.691</name>
    <name evidence="10" type="ORF">CAALFM_C602010CA</name>
</gene>
<proteinExistence type="evidence at protein level"/>
<sequence>MTTSPYPIETPFKVCIVGSGNWGTAVAKLVAENCAEKPNIFQRDVKMWVFEEEIEGRKLTEIINTEHENVKYLPEIKLPTNLVANPDIVDTVQDADLIVFNIPHQFLGRIVKQIEGKVKPTARAISCLKGLDVSPEGCKLLSTSITDTLKIYCGVLSGANIANEVAKGNWSETSIAYTVPEDFRGAGKDIDPFILKEAFHRPYFHVRVIEDVVGASIAGALKNVIACSVGFVEGAGWGDNAKAAIMRIGIKETIRFASYWELFKIKALSPPNPKTFTEESAGVADLITTCSGGRNVKVARYMIKNNVDAFEAEKIVLKGQSSQGILTAKEVHELLTNFNLQDEFPLLEATYKVIYENGSVDDFPQLLEGDQ</sequence>
<reference evidence="11" key="1">
    <citation type="journal article" date="2004" name="Proc. Natl. Acad. Sci. U.S.A.">
        <title>The diploid genome sequence of Candida albicans.</title>
        <authorList>
            <person name="Jones T."/>
            <person name="Federspiel N.A."/>
            <person name="Chibana H."/>
            <person name="Dungan J."/>
            <person name="Kalman S."/>
            <person name="Magee B.B."/>
            <person name="Newport G."/>
            <person name="Thorstenson Y.R."/>
            <person name="Agabian N."/>
            <person name="Magee P.T."/>
            <person name="Davis R.W."/>
            <person name="Scherer S."/>
        </authorList>
    </citation>
    <scope>NUCLEOTIDE SEQUENCE [LARGE SCALE GENOMIC DNA]</scope>
    <source>
        <strain evidence="11">SC5314 / ATCC MYA-2876</strain>
    </source>
</reference>
<reference evidence="11" key="2">
    <citation type="journal article" date="2007" name="Genome Biol.">
        <title>Assembly of the Candida albicans genome into sixteen supercontigs aligned on the eight chromosomes.</title>
        <authorList>
            <person name="van het Hoog M."/>
            <person name="Rast T.J."/>
            <person name="Martchenko M."/>
            <person name="Grindle S."/>
            <person name="Dignard D."/>
            <person name="Hogues H."/>
            <person name="Cuomo C."/>
            <person name="Berriman M."/>
            <person name="Scherer S."/>
            <person name="Magee B.B."/>
            <person name="Whiteway M."/>
            <person name="Chibana H."/>
            <person name="Nantel A."/>
            <person name="Magee P.T."/>
        </authorList>
    </citation>
    <scope>GENOME REANNOTATION</scope>
    <source>
        <strain evidence="11">SC5314 / ATCC MYA-2876</strain>
    </source>
</reference>
<reference evidence="11" key="3">
    <citation type="journal article" date="2013" name="Genome Biol.">
        <title>Assembly of a phased diploid Candida albicans genome facilitates allele-specific measurements and provides a simple model for repeat and indel structure.</title>
        <authorList>
            <person name="Muzzey D."/>
            <person name="Schwartz K."/>
            <person name="Weissman J.S."/>
            <person name="Sherlock G."/>
        </authorList>
    </citation>
    <scope>NUCLEOTIDE SEQUENCE [LARGE SCALE GENOMIC DNA]</scope>
    <scope>GENOME REANNOTATION</scope>
    <source>
        <strain>SC5314 / ATCC MYA-2876</strain>
    </source>
</reference>
<reference evidence="8" key="4">
    <citation type="journal article" date="2013" name="J. Infect. Dis.">
        <title>Glycerol-3-phosphate dehydrogenase 2 is a novel factor H-, factor H-like protein 1-, and plasminogen-binding surface protein of Candida albicans.</title>
        <authorList>
            <person name="Luo S."/>
            <person name="Hoffmann R."/>
            <person name="Skerka C."/>
            <person name="Zipfel P.F."/>
        </authorList>
    </citation>
    <scope>FUNCTION</scope>
    <scope>INTERACTION WITH HUMAN CFH; CFHR1 AND PLASMINOGEN</scope>
    <scope>SUBCELLULAR LOCATION</scope>
</reference>
<reference evidence="8" key="5">
    <citation type="journal article" date="2022" name="Cell Rep.">
        <title>Estrogen promotes innate immune evasion of Candida albicans through inactivation of the alternative complement system.</title>
        <authorList>
            <person name="Kumwenda P."/>
            <person name="Cottier F."/>
            <person name="Hendry A.C."/>
            <person name="Kneafsey D."/>
            <person name="Keevan B."/>
            <person name="Gallagher H."/>
            <person name="Tsai H.J."/>
            <person name="Hall R.A."/>
        </authorList>
    </citation>
    <scope>FUNCTION</scope>
    <scope>INDUCTION</scope>
    <scope>DISRUPTION PHENOTYPE</scope>
</reference>